<protein>
    <recommendedName>
        <fullName>Putative actin-23</fullName>
        <ecNumber evidence="2">3.6.4.-</ecNumber>
    </recommendedName>
</protein>
<organism>
    <name type="scientific">Dictyostelium discoideum</name>
    <name type="common">Social amoeba</name>
    <dbReference type="NCBI Taxonomy" id="44689"/>
    <lineage>
        <taxon>Eukaryota</taxon>
        <taxon>Amoebozoa</taxon>
        <taxon>Evosea</taxon>
        <taxon>Eumycetozoa</taxon>
        <taxon>Dictyostelia</taxon>
        <taxon>Dictyosteliales</taxon>
        <taxon>Dictyosteliaceae</taxon>
        <taxon>Dictyostelium</taxon>
    </lineage>
</organism>
<proteinExistence type="evidence at protein level"/>
<feature type="chain" id="PRO_0000312673" description="Putative actin-23">
    <location>
        <begin position="1"/>
        <end position="358"/>
    </location>
</feature>
<reference key="1">
    <citation type="journal article" date="2005" name="Nature">
        <title>The genome of the social amoeba Dictyostelium discoideum.</title>
        <authorList>
            <person name="Eichinger L."/>
            <person name="Pachebat J.A."/>
            <person name="Gloeckner G."/>
            <person name="Rajandream M.A."/>
            <person name="Sucgang R."/>
            <person name="Berriman M."/>
            <person name="Song J."/>
            <person name="Olsen R."/>
            <person name="Szafranski K."/>
            <person name="Xu Q."/>
            <person name="Tunggal B."/>
            <person name="Kummerfeld S."/>
            <person name="Madera M."/>
            <person name="Konfortov B.A."/>
            <person name="Rivero F."/>
            <person name="Bankier A.T."/>
            <person name="Lehmann R."/>
            <person name="Hamlin N."/>
            <person name="Davies R."/>
            <person name="Gaudet P."/>
            <person name="Fey P."/>
            <person name="Pilcher K."/>
            <person name="Chen G."/>
            <person name="Saunders D."/>
            <person name="Sodergren E.J."/>
            <person name="Davis P."/>
            <person name="Kerhornou A."/>
            <person name="Nie X."/>
            <person name="Hall N."/>
            <person name="Anjard C."/>
            <person name="Hemphill L."/>
            <person name="Bason N."/>
            <person name="Farbrother P."/>
            <person name="Desany B."/>
            <person name="Just E."/>
            <person name="Morio T."/>
            <person name="Rost R."/>
            <person name="Churcher C.M."/>
            <person name="Cooper J."/>
            <person name="Haydock S."/>
            <person name="van Driessche N."/>
            <person name="Cronin A."/>
            <person name="Goodhead I."/>
            <person name="Muzny D.M."/>
            <person name="Mourier T."/>
            <person name="Pain A."/>
            <person name="Lu M."/>
            <person name="Harper D."/>
            <person name="Lindsay R."/>
            <person name="Hauser H."/>
            <person name="James K.D."/>
            <person name="Quiles M."/>
            <person name="Madan Babu M."/>
            <person name="Saito T."/>
            <person name="Buchrieser C."/>
            <person name="Wardroper A."/>
            <person name="Felder M."/>
            <person name="Thangavelu M."/>
            <person name="Johnson D."/>
            <person name="Knights A."/>
            <person name="Loulseged H."/>
            <person name="Mungall K.L."/>
            <person name="Oliver K."/>
            <person name="Price C."/>
            <person name="Quail M.A."/>
            <person name="Urushihara H."/>
            <person name="Hernandez J."/>
            <person name="Rabbinowitsch E."/>
            <person name="Steffen D."/>
            <person name="Sanders M."/>
            <person name="Ma J."/>
            <person name="Kohara Y."/>
            <person name="Sharp S."/>
            <person name="Simmonds M.N."/>
            <person name="Spiegler S."/>
            <person name="Tivey A."/>
            <person name="Sugano S."/>
            <person name="White B."/>
            <person name="Walker D."/>
            <person name="Woodward J.R."/>
            <person name="Winckler T."/>
            <person name="Tanaka Y."/>
            <person name="Shaulsky G."/>
            <person name="Schleicher M."/>
            <person name="Weinstock G.M."/>
            <person name="Rosenthal A."/>
            <person name="Cox E.C."/>
            <person name="Chisholm R.L."/>
            <person name="Gibbs R.A."/>
            <person name="Loomis W.F."/>
            <person name="Platzer M."/>
            <person name="Kay R.R."/>
            <person name="Williams J.G."/>
            <person name="Dear P.H."/>
            <person name="Noegel A.A."/>
            <person name="Barrell B.G."/>
            <person name="Kuspa A."/>
        </authorList>
    </citation>
    <scope>NUCLEOTIDE SEQUENCE [LARGE SCALE GENOMIC DNA]</scope>
    <source>
        <strain>AX4</strain>
    </source>
</reference>
<reference key="2">
    <citation type="journal article" date="2006" name="Mol. Cell. Proteomics">
        <title>Proteomics fingerprinting of phagosome maturation and evidence for the role of a Galpha during uptake.</title>
        <authorList>
            <person name="Gotthardt D."/>
            <person name="Blancheteau V."/>
            <person name="Bosserhoff A."/>
            <person name="Ruppert T."/>
            <person name="Delorenzi M."/>
            <person name="Soldati T."/>
        </authorList>
    </citation>
    <scope>IDENTIFICATION BY MASS SPECTROMETRY [LARGE SCALE ANALYSIS]</scope>
    <source>
        <strain>AX2</strain>
    </source>
</reference>
<keyword id="KW-0067">ATP-binding</keyword>
<keyword id="KW-0963">Cytoplasm</keyword>
<keyword id="KW-0206">Cytoskeleton</keyword>
<keyword id="KW-0378">Hydrolase</keyword>
<keyword id="KW-0547">Nucleotide-binding</keyword>
<keyword id="KW-1185">Reference proteome</keyword>
<gene>
    <name type="primary">act23</name>
    <name type="ORF">DDB_G0268744</name>
</gene>
<evidence type="ECO:0000250" key="1"/>
<evidence type="ECO:0000250" key="2">
    <source>
        <dbReference type="UniProtKB" id="P68137"/>
    </source>
</evidence>
<evidence type="ECO:0000305" key="3"/>
<comment type="function">
    <text evidence="1">Actins are highly conserved proteins that are involved in various types of cell motility and are ubiquitously expressed in all eukaryotic cells. Multiple isoforms are involved in various cellular functions such as cytoskeleton structure, cell mobility, chromosome movement and muscle contraction (By similarity).</text>
</comment>
<comment type="catalytic activity">
    <reaction evidence="2">
        <text>ATP + H2O = ADP + phosphate + H(+)</text>
        <dbReference type="Rhea" id="RHEA:13065"/>
        <dbReference type="ChEBI" id="CHEBI:15377"/>
        <dbReference type="ChEBI" id="CHEBI:15378"/>
        <dbReference type="ChEBI" id="CHEBI:30616"/>
        <dbReference type="ChEBI" id="CHEBI:43474"/>
        <dbReference type="ChEBI" id="CHEBI:456216"/>
    </reaction>
</comment>
<comment type="subcellular location">
    <subcellularLocation>
        <location evidence="1">Cytoplasm</location>
        <location evidence="1">Cytoskeleton</location>
    </subcellularLocation>
</comment>
<comment type="similarity">
    <text evidence="3">Belongs to the actin family.</text>
</comment>
<name>ACT23_DICDI</name>
<dbReference type="EC" id="3.6.4.-" evidence="2"/>
<dbReference type="EMBL" id="AAFI02000004">
    <property type="protein sequence ID" value="EAL72961.1"/>
    <property type="molecule type" value="Genomic_DNA"/>
</dbReference>
<dbReference type="RefSeq" id="XP_646924.1">
    <property type="nucleotide sequence ID" value="XM_641832.1"/>
</dbReference>
<dbReference type="SMR" id="Q55EU6"/>
<dbReference type="FunCoup" id="Q55EU6">
    <property type="interactions" value="22"/>
</dbReference>
<dbReference type="STRING" id="44689.Q55EU6"/>
<dbReference type="PaxDb" id="44689-DDB0220461"/>
<dbReference type="EnsemblProtists" id="EAL72961">
    <property type="protein sequence ID" value="EAL72961"/>
    <property type="gene ID" value="DDB_G0268744"/>
</dbReference>
<dbReference type="GeneID" id="8616612"/>
<dbReference type="KEGG" id="ddi:DDB_G0268744"/>
<dbReference type="dictyBase" id="DDB_G0268744">
    <property type="gene designation" value="act23"/>
</dbReference>
<dbReference type="VEuPathDB" id="AmoebaDB:DDB_G0268744"/>
<dbReference type="eggNOG" id="KOG0676">
    <property type="taxonomic scope" value="Eukaryota"/>
</dbReference>
<dbReference type="HOGENOM" id="CLU_027965_0_2_1"/>
<dbReference type="InParanoid" id="Q55EU6"/>
<dbReference type="OMA" id="WIAKGEY"/>
<dbReference type="PhylomeDB" id="Q55EU6"/>
<dbReference type="PRO" id="PR:Q55EU6"/>
<dbReference type="Proteomes" id="UP000002195">
    <property type="component" value="Chromosome 1"/>
</dbReference>
<dbReference type="GO" id="GO:0015629">
    <property type="term" value="C:actin cytoskeleton"/>
    <property type="evidence" value="ECO:0000250"/>
    <property type="project" value="dictyBase"/>
</dbReference>
<dbReference type="GO" id="GO:0045335">
    <property type="term" value="C:phagocytic vesicle"/>
    <property type="evidence" value="ECO:0007005"/>
    <property type="project" value="dictyBase"/>
</dbReference>
<dbReference type="GO" id="GO:0005524">
    <property type="term" value="F:ATP binding"/>
    <property type="evidence" value="ECO:0007669"/>
    <property type="project" value="UniProtKB-KW"/>
</dbReference>
<dbReference type="GO" id="GO:0016787">
    <property type="term" value="F:hydrolase activity"/>
    <property type="evidence" value="ECO:0007669"/>
    <property type="project" value="UniProtKB-KW"/>
</dbReference>
<dbReference type="GO" id="GO:0017022">
    <property type="term" value="F:myosin binding"/>
    <property type="evidence" value="ECO:0000250"/>
    <property type="project" value="dictyBase"/>
</dbReference>
<dbReference type="GO" id="GO:0005200">
    <property type="term" value="F:structural constituent of cytoskeleton"/>
    <property type="evidence" value="ECO:0000250"/>
    <property type="project" value="dictyBase"/>
</dbReference>
<dbReference type="GO" id="GO:0006909">
    <property type="term" value="P:phagocytosis"/>
    <property type="evidence" value="ECO:0007669"/>
    <property type="project" value="UniProtKB-ARBA"/>
</dbReference>
<dbReference type="CDD" id="cd10224">
    <property type="entry name" value="ASKHA_NBD_actin"/>
    <property type="match status" value="1"/>
</dbReference>
<dbReference type="FunFam" id="2.30.36.70:FF:000001">
    <property type="entry name" value="Actin, alpha skeletal muscle"/>
    <property type="match status" value="1"/>
</dbReference>
<dbReference type="FunFam" id="3.30.420.40:FF:000131">
    <property type="entry name" value="Actin, alpha skeletal muscle"/>
    <property type="match status" value="1"/>
</dbReference>
<dbReference type="FunFam" id="3.30.420.40:FF:000291">
    <property type="entry name" value="Actin, alpha skeletal muscle"/>
    <property type="match status" value="1"/>
</dbReference>
<dbReference type="FunFam" id="3.90.640.10:FF:000047">
    <property type="entry name" value="Actin, alpha skeletal muscle"/>
    <property type="match status" value="1"/>
</dbReference>
<dbReference type="Gene3D" id="3.30.420.40">
    <property type="match status" value="2"/>
</dbReference>
<dbReference type="Gene3D" id="3.90.640.10">
    <property type="entry name" value="Actin, Chain A, domain 4"/>
    <property type="match status" value="1"/>
</dbReference>
<dbReference type="InterPro" id="IPR004000">
    <property type="entry name" value="Actin"/>
</dbReference>
<dbReference type="InterPro" id="IPR020902">
    <property type="entry name" value="Actin/actin-like_CS"/>
</dbReference>
<dbReference type="InterPro" id="IPR004001">
    <property type="entry name" value="Actin_CS"/>
</dbReference>
<dbReference type="InterPro" id="IPR043129">
    <property type="entry name" value="ATPase_NBD"/>
</dbReference>
<dbReference type="PANTHER" id="PTHR11937">
    <property type="entry name" value="ACTIN"/>
    <property type="match status" value="1"/>
</dbReference>
<dbReference type="Pfam" id="PF00022">
    <property type="entry name" value="Actin"/>
    <property type="match status" value="1"/>
</dbReference>
<dbReference type="PRINTS" id="PR00190">
    <property type="entry name" value="ACTIN"/>
</dbReference>
<dbReference type="SMART" id="SM00268">
    <property type="entry name" value="ACTIN"/>
    <property type="match status" value="1"/>
</dbReference>
<dbReference type="SUPFAM" id="SSF53067">
    <property type="entry name" value="Actin-like ATPase domain"/>
    <property type="match status" value="2"/>
</dbReference>
<dbReference type="PROSITE" id="PS00406">
    <property type="entry name" value="ACTINS_1"/>
    <property type="match status" value="1"/>
</dbReference>
<dbReference type="PROSITE" id="PS00432">
    <property type="entry name" value="ACTINS_2"/>
    <property type="match status" value="1"/>
</dbReference>
<dbReference type="PROSITE" id="PS01132">
    <property type="entry name" value="ACTINS_ACT_LIKE"/>
    <property type="match status" value="1"/>
</dbReference>
<accession>Q55EU6</accession>
<sequence>MCKAGFAGDDAPCTVFPSIVGRPRHTGVMVGMCQKGSYVGDEAQSKRGILTLKYPIEHGIVTNWDDMEKIWHHTFYNELRVAPEEHPVLLTEAPLNPKANREKMTQIMFETFNTPAMYVAIQAVLSLYASGRTTGIVMDSGDGVSHTVPIYEGYALPHAILRLDLAGRDLTDYLMKILTERGYSFTTTAEREIVRDIKEKLAYVALDFEAEMQTATSSALEKSYELPDGQVITIGNERFRCPEALFQPSFLGMESAGIHETTYNSIMKCDVDIRKDLYGNVVLSGGTTMFPGIADRMNKELTALAPSTMKIKIIAPPERKYSVWIGSILASLSTFQQMWISKEEYDESGPSIVHRKCF</sequence>